<feature type="chain" id="PRO_1000082978" description="UPF0262 protein BCAN_A0255">
    <location>
        <begin position="1"/>
        <end position="160"/>
    </location>
</feature>
<protein>
    <recommendedName>
        <fullName evidence="1">UPF0262 protein BCAN_A0255</fullName>
    </recommendedName>
</protein>
<organism>
    <name type="scientific">Brucella canis (strain ATCC 23365 / NCTC 10854 / RM-666)</name>
    <dbReference type="NCBI Taxonomy" id="483179"/>
    <lineage>
        <taxon>Bacteria</taxon>
        <taxon>Pseudomonadati</taxon>
        <taxon>Pseudomonadota</taxon>
        <taxon>Alphaproteobacteria</taxon>
        <taxon>Hyphomicrobiales</taxon>
        <taxon>Brucellaceae</taxon>
        <taxon>Brucella/Ochrobactrum group</taxon>
        <taxon>Brucella</taxon>
    </lineage>
</organism>
<keyword id="KW-1185">Reference proteome</keyword>
<comment type="similarity">
    <text evidence="1">Belongs to the UPF0262 family.</text>
</comment>
<proteinExistence type="inferred from homology"/>
<dbReference type="EMBL" id="CP000872">
    <property type="protein sequence ID" value="ABX61348.1"/>
    <property type="molecule type" value="Genomic_DNA"/>
</dbReference>
<dbReference type="RefSeq" id="WP_002965533.1">
    <property type="nucleotide sequence ID" value="NC_010103.1"/>
</dbReference>
<dbReference type="KEGG" id="bcs:BCAN_A0255"/>
<dbReference type="HOGENOM" id="CLU_112904_0_0_5"/>
<dbReference type="PhylomeDB" id="A9M7T8"/>
<dbReference type="Proteomes" id="UP000001385">
    <property type="component" value="Chromosome I"/>
</dbReference>
<dbReference type="HAMAP" id="MF_00678">
    <property type="entry name" value="UPF0262"/>
    <property type="match status" value="1"/>
</dbReference>
<dbReference type="InterPro" id="IPR008321">
    <property type="entry name" value="UCP032146"/>
</dbReference>
<dbReference type="NCBIfam" id="NF002769">
    <property type="entry name" value="PRK02853.1"/>
    <property type="match status" value="1"/>
</dbReference>
<dbReference type="Pfam" id="PF06793">
    <property type="entry name" value="UPF0262"/>
    <property type="match status" value="1"/>
</dbReference>
<dbReference type="PIRSF" id="PIRSF032146">
    <property type="entry name" value="UCP032146"/>
    <property type="match status" value="1"/>
</dbReference>
<evidence type="ECO:0000255" key="1">
    <source>
        <dbReference type="HAMAP-Rule" id="MF_00678"/>
    </source>
</evidence>
<gene>
    <name type="ordered locus">BCAN_A0255</name>
</gene>
<reference key="1">
    <citation type="submission" date="2007-10" db="EMBL/GenBank/DDBJ databases">
        <title>Brucella canis ATCC 23365 whole genome shotgun sequencing project.</title>
        <authorList>
            <person name="Setubal J.C."/>
            <person name="Bowns C."/>
            <person name="Boyle S."/>
            <person name="Crasta O.R."/>
            <person name="Czar M.J."/>
            <person name="Dharmanolla C."/>
            <person name="Gillespie J.J."/>
            <person name="Kenyon R.W."/>
            <person name="Lu J."/>
            <person name="Mane S."/>
            <person name="Mohapatra S."/>
            <person name="Nagrani S."/>
            <person name="Purkayastha A."/>
            <person name="Rajasimha H.K."/>
            <person name="Shallom J.M."/>
            <person name="Shallom S."/>
            <person name="Shukla M."/>
            <person name="Snyder E.E."/>
            <person name="Sobral B.W."/>
            <person name="Wattam A.R."/>
            <person name="Will R."/>
            <person name="Williams K."/>
            <person name="Yoo H."/>
            <person name="Bruce D."/>
            <person name="Detter C."/>
            <person name="Munk C."/>
            <person name="Brettin T.S."/>
        </authorList>
    </citation>
    <scope>NUCLEOTIDE SEQUENCE [LARGE SCALE GENOMIC DNA]</scope>
    <source>
        <strain>ATCC 23365 / NCTC 10854 / RM-666</strain>
    </source>
</reference>
<sequence length="160" mass="18129">MTADVPNARLVDVELDESIGRSTPDVEHERAVAIFDLIEENSFHPVGDQKGGPYRLKLSLMESRLIFSITRENGDAVATHILSLTPLRRVVRDYFMICESYYQAIRSATPSKIEAIDMGRRGLHNEGSQTLQARLKGKIEVDFDTARRLFTLVCVLHWRG</sequence>
<name>Y255_BRUC2</name>
<accession>A9M7T8</accession>